<accession>C6HRP6</accession>
<comment type="function">
    <text evidence="1">ATPase required for the post-translational delivery of tail-anchored (TA) proteins to the endoplasmic reticulum. Recognizes and selectively binds the transmembrane domain of TA proteins in the cytosol. This complex then targets to the endoplasmic reticulum by membrane-bound receptors, where the tail-anchored protein is released for insertion. This process is regulated by ATP binding and hydrolysis. ATP binding drives the homodimer towards the closed dimer state, facilitating recognition of newly synthesized TA membrane proteins. ATP hydrolysis is required for insertion. Subsequently, the homodimer reverts towards the open dimer state, lowering its affinity for the membrane-bound receptor, and returning it to the cytosol to initiate a new round of targeting.</text>
</comment>
<comment type="subunit">
    <text evidence="1">Homodimer.</text>
</comment>
<comment type="subcellular location">
    <subcellularLocation>
        <location evidence="1">Cytoplasm</location>
    </subcellularLocation>
    <subcellularLocation>
        <location evidence="1">Endoplasmic reticulum</location>
    </subcellularLocation>
</comment>
<comment type="similarity">
    <text evidence="1">Belongs to the arsA ATPase family.</text>
</comment>
<organism>
    <name type="scientific">Ajellomyces capsulatus (strain H143)</name>
    <name type="common">Darling's disease fungus</name>
    <name type="synonym">Histoplasma capsulatum</name>
    <dbReference type="NCBI Taxonomy" id="544712"/>
    <lineage>
        <taxon>Eukaryota</taxon>
        <taxon>Fungi</taxon>
        <taxon>Dikarya</taxon>
        <taxon>Ascomycota</taxon>
        <taxon>Pezizomycotina</taxon>
        <taxon>Eurotiomycetes</taxon>
        <taxon>Eurotiomycetidae</taxon>
        <taxon>Onygenales</taxon>
        <taxon>Ajellomycetaceae</taxon>
        <taxon>Histoplasma</taxon>
    </lineage>
</organism>
<reference key="1">
    <citation type="submission" date="2009-05" db="EMBL/GenBank/DDBJ databases">
        <title>The genome sequence of Ajellomyces capsulatus strain H143.</title>
        <authorList>
            <person name="Champion M."/>
            <person name="Cuomo C.A."/>
            <person name="Ma L.-J."/>
            <person name="Henn M.R."/>
            <person name="Sil A."/>
            <person name="Goldman B."/>
            <person name="Young S.K."/>
            <person name="Kodira C.D."/>
            <person name="Zeng Q."/>
            <person name="Koehrsen M."/>
            <person name="Alvarado L."/>
            <person name="Berlin A.M."/>
            <person name="Borenstein D."/>
            <person name="Chen Z."/>
            <person name="Engels R."/>
            <person name="Freedman E."/>
            <person name="Gellesch M."/>
            <person name="Goldberg J."/>
            <person name="Griggs A."/>
            <person name="Gujja S."/>
            <person name="Heiman D.I."/>
            <person name="Hepburn T.A."/>
            <person name="Howarth C."/>
            <person name="Jen D."/>
            <person name="Larson L."/>
            <person name="Lewis B."/>
            <person name="Mehta T."/>
            <person name="Park D."/>
            <person name="Pearson M."/>
            <person name="Roberts A."/>
            <person name="Saif S."/>
            <person name="Shea T.D."/>
            <person name="Shenoy N."/>
            <person name="Sisk P."/>
            <person name="Stolte C."/>
            <person name="Sykes S."/>
            <person name="Walk T."/>
            <person name="White J."/>
            <person name="Yandava C."/>
            <person name="Klein B."/>
            <person name="McEwen J.G."/>
            <person name="Puccia R."/>
            <person name="Goldman G.H."/>
            <person name="Felipe M.S."/>
            <person name="Nino-Vega G."/>
            <person name="San-Blas G."/>
            <person name="Taylor J.W."/>
            <person name="Mendoza L."/>
            <person name="Galagan J.E."/>
            <person name="Nusbaum C."/>
            <person name="Birren B.W."/>
        </authorList>
    </citation>
    <scope>NUCLEOTIDE SEQUENCE [LARGE SCALE GENOMIC DNA]</scope>
    <source>
        <strain>H143</strain>
    </source>
</reference>
<feature type="chain" id="PRO_0000388182" description="ATPase GET3">
    <location>
        <begin position="1"/>
        <end position="341"/>
    </location>
</feature>
<feature type="active site" evidence="1">
    <location>
        <position position="63"/>
    </location>
</feature>
<feature type="binding site" evidence="1">
    <location>
        <begin position="34"/>
        <end position="41"/>
    </location>
    <ligand>
        <name>ATP</name>
        <dbReference type="ChEBI" id="CHEBI:30616"/>
    </ligand>
</feature>
<feature type="binding site" evidence="1">
    <location>
        <position position="245"/>
    </location>
    <ligand>
        <name>ATP</name>
        <dbReference type="ChEBI" id="CHEBI:30616"/>
    </ligand>
</feature>
<feature type="binding site" evidence="1">
    <location>
        <position position="272"/>
    </location>
    <ligand>
        <name>ATP</name>
        <dbReference type="ChEBI" id="CHEBI:30616"/>
    </ligand>
</feature>
<feature type="binding site" evidence="1">
    <location>
        <position position="283"/>
    </location>
    <ligand>
        <name>Zn(2+)</name>
        <dbReference type="ChEBI" id="CHEBI:29105"/>
        <note>ligand shared between dimeric partners</note>
    </ligand>
</feature>
<feature type="binding site" evidence="1">
    <location>
        <position position="286"/>
    </location>
    <ligand>
        <name>Zn(2+)</name>
        <dbReference type="ChEBI" id="CHEBI:29105"/>
        <note>ligand shared between dimeric partners</note>
    </ligand>
</feature>
<gene>
    <name evidence="1" type="primary">GET3</name>
    <name type="ORF">HCDG_08631</name>
</gene>
<proteinExistence type="inferred from homology"/>
<sequence length="341" mass="37416">MSSTAMVSGDDSLEPTLQSLLDQKTLRWVFVGGKGGVGKTTTSCSLAIQLAKVRKSVLLISTDPAHNLSDAFGQKFGKEARLVDGFDNLSAMEIDPNGSIQDLLATGGDQADDPMAGLGLGGMMQDLAFSIPGVDEAMSFAEVLKQVKSLSYEVIVFDTAPTGHTLRFLQFPTVLEKALAKLSQLSSQFGPMLNSILGARGGLPGGQNLDEILSKMESLRETIGEVNAQFKDADLTTFVCVCIAEFLSLYETERMIQELTSYQIDTHCIVVNQLLFPGKDSSCEQCKARRKMQKKYLNEIEDLYEDFNVVRMPMLVEEVRGKEKLEKFSNMLVNPYVPPEE</sequence>
<protein>
    <recommendedName>
        <fullName evidence="1">ATPase GET3</fullName>
        <ecNumber evidence="1">3.6.-.-</ecNumber>
    </recommendedName>
    <alternativeName>
        <fullName evidence="1">Arsenical pump-driving ATPase</fullName>
    </alternativeName>
    <alternativeName>
        <fullName evidence="1">Arsenite-stimulated ATPase</fullName>
    </alternativeName>
    <alternativeName>
        <fullName evidence="1">Golgi to ER traffic protein 3</fullName>
    </alternativeName>
    <alternativeName>
        <fullName evidence="1">Guided entry of tail-anchored proteins 3</fullName>
    </alternativeName>
</protein>
<name>GET3_AJECH</name>
<keyword id="KW-0067">ATP-binding</keyword>
<keyword id="KW-0963">Cytoplasm</keyword>
<keyword id="KW-0256">Endoplasmic reticulum</keyword>
<keyword id="KW-0378">Hydrolase</keyword>
<keyword id="KW-0479">Metal-binding</keyword>
<keyword id="KW-0547">Nucleotide-binding</keyword>
<keyword id="KW-1185">Reference proteome</keyword>
<keyword id="KW-0813">Transport</keyword>
<keyword id="KW-0862">Zinc</keyword>
<dbReference type="EC" id="3.6.-.-" evidence="1"/>
<dbReference type="EMBL" id="GG692436">
    <property type="protein sequence ID" value="EER37180.1"/>
    <property type="molecule type" value="Genomic_DNA"/>
</dbReference>
<dbReference type="SMR" id="C6HRP6"/>
<dbReference type="STRING" id="544712.C6HRP6"/>
<dbReference type="VEuPathDB" id="FungiDB:HCDG_08631"/>
<dbReference type="eggNOG" id="KOG2825">
    <property type="taxonomic scope" value="Eukaryota"/>
</dbReference>
<dbReference type="HOGENOM" id="CLU_040761_0_0_1"/>
<dbReference type="OMA" id="MDAPYEF"/>
<dbReference type="OrthoDB" id="5393at299071"/>
<dbReference type="Proteomes" id="UP000002624">
    <property type="component" value="Unassembled WGS sequence"/>
</dbReference>
<dbReference type="GO" id="GO:0043529">
    <property type="term" value="C:GET complex"/>
    <property type="evidence" value="ECO:0007669"/>
    <property type="project" value="TreeGrafter"/>
</dbReference>
<dbReference type="GO" id="GO:0005524">
    <property type="term" value="F:ATP binding"/>
    <property type="evidence" value="ECO:0007669"/>
    <property type="project" value="UniProtKB-UniRule"/>
</dbReference>
<dbReference type="GO" id="GO:0016887">
    <property type="term" value="F:ATP hydrolysis activity"/>
    <property type="evidence" value="ECO:0007669"/>
    <property type="project" value="InterPro"/>
</dbReference>
<dbReference type="GO" id="GO:0046872">
    <property type="term" value="F:metal ion binding"/>
    <property type="evidence" value="ECO:0007669"/>
    <property type="project" value="UniProtKB-KW"/>
</dbReference>
<dbReference type="GO" id="GO:0071816">
    <property type="term" value="P:tail-anchored membrane protein insertion into ER membrane"/>
    <property type="evidence" value="ECO:0007669"/>
    <property type="project" value="TreeGrafter"/>
</dbReference>
<dbReference type="CDD" id="cd02035">
    <property type="entry name" value="ArsA"/>
    <property type="match status" value="1"/>
</dbReference>
<dbReference type="FunFam" id="3.40.50.300:FF:000235">
    <property type="entry name" value="ATPase ASNA1"/>
    <property type="match status" value="1"/>
</dbReference>
<dbReference type="Gene3D" id="3.40.50.300">
    <property type="entry name" value="P-loop containing nucleotide triphosphate hydrolases"/>
    <property type="match status" value="1"/>
</dbReference>
<dbReference type="HAMAP" id="MF_03112">
    <property type="entry name" value="Asna1_Get3"/>
    <property type="match status" value="1"/>
</dbReference>
<dbReference type="InterPro" id="IPR025723">
    <property type="entry name" value="Anion-transp_ATPase-like_dom"/>
</dbReference>
<dbReference type="InterPro" id="IPR016300">
    <property type="entry name" value="ATPase_ArsA/GET3"/>
</dbReference>
<dbReference type="InterPro" id="IPR027542">
    <property type="entry name" value="ATPase_ArsA/GET3_euk"/>
</dbReference>
<dbReference type="InterPro" id="IPR027417">
    <property type="entry name" value="P-loop_NTPase"/>
</dbReference>
<dbReference type="NCBIfam" id="TIGR00345">
    <property type="entry name" value="GET3_arsA_TRC40"/>
    <property type="match status" value="1"/>
</dbReference>
<dbReference type="PANTHER" id="PTHR10803">
    <property type="entry name" value="ARSENICAL PUMP-DRIVING ATPASE ARSENITE-TRANSLOCATING ATPASE"/>
    <property type="match status" value="1"/>
</dbReference>
<dbReference type="PANTHER" id="PTHR10803:SF3">
    <property type="entry name" value="ATPASE GET3"/>
    <property type="match status" value="1"/>
</dbReference>
<dbReference type="Pfam" id="PF02374">
    <property type="entry name" value="ArsA_ATPase"/>
    <property type="match status" value="1"/>
</dbReference>
<dbReference type="SUPFAM" id="SSF52540">
    <property type="entry name" value="P-loop containing nucleoside triphosphate hydrolases"/>
    <property type="match status" value="1"/>
</dbReference>
<evidence type="ECO:0000255" key="1">
    <source>
        <dbReference type="HAMAP-Rule" id="MF_03112"/>
    </source>
</evidence>